<proteinExistence type="evidence at protein level"/>
<comment type="function">
    <text>Involved in a type II secretion system (T2SS, formerly general secretion pathway, GSP) for the export of proteins. Required for the translocation of the multiple pectic enzymes.</text>
</comment>
<comment type="subcellular location">
    <subcellularLocation>
        <location evidence="2">Cell inner membrane</location>
    </subcellularLocation>
</comment>
<comment type="similarity">
    <text evidence="2">Belongs to the GSP C family.</text>
</comment>
<dbReference type="EMBL" id="X65265">
    <property type="protein sequence ID" value="CAA46369.1"/>
    <property type="molecule type" value="Genomic_DNA"/>
</dbReference>
<dbReference type="EMBL" id="CP002038">
    <property type="protein sequence ID" value="ADM99377.1"/>
    <property type="molecule type" value="Genomic_DNA"/>
</dbReference>
<dbReference type="PIR" id="S28013">
    <property type="entry name" value="S28013"/>
</dbReference>
<dbReference type="PDB" id="2LNV">
    <property type="method" value="NMR"/>
    <property type="chains" value="A=77-172"/>
</dbReference>
<dbReference type="PDBsum" id="2LNV"/>
<dbReference type="BMRB" id="Q01564"/>
<dbReference type="SMR" id="Q01564"/>
<dbReference type="STRING" id="198628.Dda3937_02414"/>
<dbReference type="KEGG" id="ddd:Dda3937_02414"/>
<dbReference type="PATRIC" id="fig|198628.6.peg.3138"/>
<dbReference type="eggNOG" id="COG3031">
    <property type="taxonomic scope" value="Bacteria"/>
</dbReference>
<dbReference type="HOGENOM" id="CLU_068012_0_1_6"/>
<dbReference type="OrthoDB" id="1491375at2"/>
<dbReference type="EvolutionaryTrace" id="Q01564"/>
<dbReference type="PHI-base" id="PHI:6859"/>
<dbReference type="Proteomes" id="UP000006859">
    <property type="component" value="Chromosome"/>
</dbReference>
<dbReference type="GO" id="GO:0005886">
    <property type="term" value="C:plasma membrane"/>
    <property type="evidence" value="ECO:0007669"/>
    <property type="project" value="UniProtKB-SubCell"/>
</dbReference>
<dbReference type="GO" id="GO:0015627">
    <property type="term" value="C:type II protein secretion system complex"/>
    <property type="evidence" value="ECO:0007669"/>
    <property type="project" value="InterPro"/>
</dbReference>
<dbReference type="GO" id="GO:0016485">
    <property type="term" value="P:protein processing"/>
    <property type="evidence" value="ECO:0000315"/>
    <property type="project" value="ASAP"/>
</dbReference>
<dbReference type="GO" id="GO:0015628">
    <property type="term" value="P:protein secretion by the type II secretion system"/>
    <property type="evidence" value="ECO:0007669"/>
    <property type="project" value="InterPro"/>
</dbReference>
<dbReference type="Gene3D" id="2.30.30.830">
    <property type="match status" value="1"/>
</dbReference>
<dbReference type="Gene3D" id="2.30.42.10">
    <property type="match status" value="1"/>
</dbReference>
<dbReference type="InterPro" id="IPR036034">
    <property type="entry name" value="PDZ_sf"/>
</dbReference>
<dbReference type="InterPro" id="IPR024961">
    <property type="entry name" value="T2SS_GspC_N"/>
</dbReference>
<dbReference type="InterPro" id="IPR001639">
    <property type="entry name" value="T2SS_protein-GspC"/>
</dbReference>
<dbReference type="NCBIfam" id="TIGR01713">
    <property type="entry name" value="typeII_sec_gspC"/>
    <property type="match status" value="1"/>
</dbReference>
<dbReference type="Pfam" id="PF11356">
    <property type="entry name" value="T2SSC"/>
    <property type="match status" value="1"/>
</dbReference>
<dbReference type="PRINTS" id="PR00810">
    <property type="entry name" value="BCTERIALGSPC"/>
</dbReference>
<dbReference type="SUPFAM" id="SSF50156">
    <property type="entry name" value="PDZ domain-like"/>
    <property type="match status" value="1"/>
</dbReference>
<dbReference type="PROSITE" id="PS01141">
    <property type="entry name" value="T2SP_C"/>
    <property type="match status" value="1"/>
</dbReference>
<accession>Q01564</accession>
<accession>E0SM42</accession>
<reference key="1">
    <citation type="journal article" date="1992" name="Mol. Microbiol.">
        <title>Some of the out genes involved in the secretion of pectate lyases in Erwinia chrysanthemi are regulated by kdgR.</title>
        <authorList>
            <person name="Condemine G."/>
            <person name="Dorel C."/>
            <person name="Hugouvieux-Cotte-Pattat N."/>
            <person name="Robert-Baudouy J."/>
        </authorList>
    </citation>
    <scope>NUCLEOTIDE SEQUENCE [GENOMIC DNA]</scope>
    <source>
        <strain>3937</strain>
    </source>
</reference>
<reference key="2">
    <citation type="journal article" date="2011" name="J. Bacteriol.">
        <title>Genome sequence of the plant-pathogenic bacterium Dickeya dadantii 3937.</title>
        <authorList>
            <person name="Glasner J.D."/>
            <person name="Yang C.H."/>
            <person name="Reverchon S."/>
            <person name="Hugouvieux-Cotte-Pattat N."/>
            <person name="Condemine G."/>
            <person name="Bohin J.P."/>
            <person name="Van Gijsegem F."/>
            <person name="Yang S."/>
            <person name="Franza T."/>
            <person name="Expert D."/>
            <person name="Plunkett G. III"/>
            <person name="San Francisco M.J."/>
            <person name="Charkowski A.O."/>
            <person name="Py B."/>
            <person name="Bell K."/>
            <person name="Rauscher L."/>
            <person name="Rodriguez-Palenzuela P."/>
            <person name="Toussaint A."/>
            <person name="Holeva M.C."/>
            <person name="He S.Y."/>
            <person name="Douet V."/>
            <person name="Boccara M."/>
            <person name="Blanco C."/>
            <person name="Toth I."/>
            <person name="Anderson B.D."/>
            <person name="Biehl B.S."/>
            <person name="Mau B."/>
            <person name="Flynn S.M."/>
            <person name="Barras F."/>
            <person name="Lindeberg M."/>
            <person name="Birch P.R."/>
            <person name="Tsuyumu S."/>
            <person name="Shi X."/>
            <person name="Hibbing M."/>
            <person name="Yap M.N."/>
            <person name="Carpentier M."/>
            <person name="Dassa E."/>
            <person name="Umehara M."/>
            <person name="Kim J.F."/>
            <person name="Rusch M."/>
            <person name="Soni P."/>
            <person name="Mayhew G.F."/>
            <person name="Fouts D.E."/>
            <person name="Gill S.R."/>
            <person name="Blattner F.R."/>
            <person name="Keen N.T."/>
            <person name="Perna N.T."/>
        </authorList>
    </citation>
    <scope>NUCLEOTIDE SEQUENCE [LARGE SCALE GENOMIC DNA]</scope>
    <source>
        <strain>3937</strain>
    </source>
</reference>
<feature type="chain" id="PRO_0000215003" description="Type II secretion system protein C">
    <location>
        <begin position="1"/>
        <end position="272"/>
    </location>
</feature>
<feature type="topological domain" description="Cytoplasmic" evidence="1">
    <location>
        <begin position="1"/>
        <end position="16"/>
    </location>
</feature>
<feature type="transmembrane region" description="Helical" evidence="1">
    <location>
        <begin position="17"/>
        <end position="35"/>
    </location>
</feature>
<feature type="topological domain" description="Periplasmic" evidence="1">
    <location>
        <begin position="36"/>
        <end position="272"/>
    </location>
</feature>
<feature type="helix" evidence="3">
    <location>
        <begin position="82"/>
        <end position="85"/>
    </location>
</feature>
<feature type="strand" evidence="3">
    <location>
        <begin position="95"/>
        <end position="101"/>
    </location>
</feature>
<feature type="strand" evidence="3">
    <location>
        <begin position="104"/>
        <end position="108"/>
    </location>
</feature>
<feature type="strand" evidence="3">
    <location>
        <begin position="110"/>
        <end position="117"/>
    </location>
</feature>
<feature type="strand" evidence="3">
    <location>
        <begin position="120"/>
        <end position="122"/>
    </location>
</feature>
<feature type="strand" evidence="3">
    <location>
        <begin position="129"/>
        <end position="131"/>
    </location>
</feature>
<feature type="strand" evidence="3">
    <location>
        <begin position="134"/>
        <end position="139"/>
    </location>
</feature>
<feature type="strand" evidence="3">
    <location>
        <begin position="142"/>
        <end position="147"/>
    </location>
</feature>
<feature type="strand" evidence="3">
    <location>
        <begin position="150"/>
        <end position="154"/>
    </location>
</feature>
<feature type="turn" evidence="3">
    <location>
        <begin position="160"/>
        <end position="162"/>
    </location>
</feature>
<gene>
    <name type="primary">outC</name>
    <name type="ordered locus">Dda3937_02414</name>
</gene>
<organism>
    <name type="scientific">Dickeya dadantii (strain 3937)</name>
    <name type="common">Erwinia chrysanthemi (strain 3937)</name>
    <dbReference type="NCBI Taxonomy" id="198628"/>
    <lineage>
        <taxon>Bacteria</taxon>
        <taxon>Pseudomonadati</taxon>
        <taxon>Pseudomonadota</taxon>
        <taxon>Gammaproteobacteria</taxon>
        <taxon>Enterobacterales</taxon>
        <taxon>Pectobacteriaceae</taxon>
        <taxon>Dickeya</taxon>
    </lineage>
</organism>
<keyword id="KW-0002">3D-structure</keyword>
<keyword id="KW-0997">Cell inner membrane</keyword>
<keyword id="KW-1003">Cell membrane</keyword>
<keyword id="KW-0472">Membrane</keyword>
<keyword id="KW-0653">Protein transport</keyword>
<keyword id="KW-1185">Reference proteome</keyword>
<keyword id="KW-0812">Transmembrane</keyword>
<keyword id="KW-1133">Transmembrane helix</keyword>
<keyword id="KW-0813">Transport</keyword>
<evidence type="ECO:0000255" key="1"/>
<evidence type="ECO:0000305" key="2"/>
<evidence type="ECO:0007829" key="3">
    <source>
        <dbReference type="PDB" id="2LNV"/>
    </source>
</evidence>
<name>GSPC2_DICD3</name>
<sequence>MNISKLPPLSPSVIRRILFYLLMLLFCQQLAMIFWRIGLPDNAPVSSVQITPAQARQQPVTLNDFTLFGVSPEKNKAGALDASQMSNLPPSTLNLSLTGVMAGDDDSRSIAIISKDNEQFSRGVNEEVPGYNAKIVSIRPDRVVLQYQGRYEVLGLYSQEDSGSDGVPGAQVNEQLQQRASTTMSDYVSFSPIMNDNKLQGYRLNPGPKSDSFYRVGLQDNDMAVALNGLDLRDAEQAKKAMERMADVHNFTLTVERDGQRQDIYMEFGGDE</sequence>
<protein>
    <recommendedName>
        <fullName>Type II secretion system protein C</fullName>
        <shortName>T2SS protein C</shortName>
    </recommendedName>
    <alternativeName>
        <fullName>General secretion pathway protein C</fullName>
    </alternativeName>
    <alternativeName>
        <fullName>Pectic enzymes secretion protein OutC</fullName>
    </alternativeName>
</protein>